<dbReference type="EMBL" id="FO081114">
    <property type="protein sequence ID" value="CCD69205.1"/>
    <property type="molecule type" value="Genomic_DNA"/>
</dbReference>
<dbReference type="PIR" id="H88130">
    <property type="entry name" value="H88130"/>
</dbReference>
<dbReference type="RefSeq" id="NP_494837.2">
    <property type="nucleotide sequence ID" value="NM_062436.5"/>
</dbReference>
<dbReference type="SMR" id="Q19326"/>
<dbReference type="BioGRID" id="39163">
    <property type="interactions" value="10"/>
</dbReference>
<dbReference type="FunCoup" id="Q19326">
    <property type="interactions" value="3168"/>
</dbReference>
<dbReference type="IntAct" id="Q19326">
    <property type="interactions" value="1"/>
</dbReference>
<dbReference type="STRING" id="6239.F10G7.3.1"/>
<dbReference type="iPTMnet" id="Q19326"/>
<dbReference type="PaxDb" id="6239-F10G7.3"/>
<dbReference type="PeptideAtlas" id="Q19326"/>
<dbReference type="EnsemblMetazoa" id="F10G7.3.1">
    <property type="protein sequence ID" value="F10G7.3.1"/>
    <property type="gene ID" value="WBGene00006817"/>
</dbReference>
<dbReference type="GeneID" id="173809"/>
<dbReference type="KEGG" id="cel:CELE_F10G7.3"/>
<dbReference type="UCSC" id="F10G7.3">
    <property type="organism name" value="c. elegans"/>
</dbReference>
<dbReference type="AGR" id="WB:WBGene00006817"/>
<dbReference type="CTD" id="173809"/>
<dbReference type="WormBase" id="F10G7.3">
    <property type="protein sequence ID" value="CE39722"/>
    <property type="gene ID" value="WBGene00006817"/>
    <property type="gene designation" value="unc-85"/>
</dbReference>
<dbReference type="eggNOG" id="KOG3265">
    <property type="taxonomic scope" value="Eukaryota"/>
</dbReference>
<dbReference type="GeneTree" id="ENSGT00390000004692"/>
<dbReference type="HOGENOM" id="CLU_060354_0_2_1"/>
<dbReference type="InParanoid" id="Q19326"/>
<dbReference type="OMA" id="CSYDERE"/>
<dbReference type="OrthoDB" id="29755at2759"/>
<dbReference type="PhylomeDB" id="Q19326"/>
<dbReference type="Reactome" id="R-CEL-2559584">
    <property type="pathway name" value="Formation of Senescence-Associated Heterochromatin Foci (SAHF)"/>
</dbReference>
<dbReference type="PRO" id="PR:Q19326"/>
<dbReference type="Proteomes" id="UP000001940">
    <property type="component" value="Chromosome II"/>
</dbReference>
<dbReference type="Bgee" id="WBGene00006817">
    <property type="expression patterns" value="Expressed in embryo and 4 other cell types or tissues"/>
</dbReference>
<dbReference type="GO" id="GO:0000785">
    <property type="term" value="C:chromatin"/>
    <property type="evidence" value="ECO:0000318"/>
    <property type="project" value="GO_Central"/>
</dbReference>
<dbReference type="GO" id="GO:0005634">
    <property type="term" value="C:nucleus"/>
    <property type="evidence" value="ECO:0000314"/>
    <property type="project" value="WormBase"/>
</dbReference>
<dbReference type="GO" id="GO:0042393">
    <property type="term" value="F:histone binding"/>
    <property type="evidence" value="ECO:0000318"/>
    <property type="project" value="GO_Central"/>
</dbReference>
<dbReference type="GO" id="GO:0006335">
    <property type="term" value="P:DNA replication-dependent chromatin assembly"/>
    <property type="evidence" value="ECO:0000318"/>
    <property type="project" value="GO_Central"/>
</dbReference>
<dbReference type="GO" id="GO:0018991">
    <property type="term" value="P:egg-laying behavior"/>
    <property type="evidence" value="ECO:0000315"/>
    <property type="project" value="WormBase"/>
</dbReference>
<dbReference type="GO" id="GO:0006334">
    <property type="term" value="P:nucleosome assembly"/>
    <property type="evidence" value="ECO:0007669"/>
    <property type="project" value="InterPro"/>
</dbReference>
<dbReference type="GO" id="GO:0006337">
    <property type="term" value="P:nucleosome disassembly"/>
    <property type="evidence" value="ECO:0007669"/>
    <property type="project" value="InterPro"/>
</dbReference>
<dbReference type="GO" id="GO:0009791">
    <property type="term" value="P:post-embryonic development"/>
    <property type="evidence" value="ECO:0000315"/>
    <property type="project" value="WormBase"/>
</dbReference>
<dbReference type="FunFam" id="2.60.40.1490:FF:000001">
    <property type="entry name" value="Histone chaperone ASF1"/>
    <property type="match status" value="1"/>
</dbReference>
<dbReference type="Gene3D" id="2.60.40.1490">
    <property type="entry name" value="Histone chaperone ASF1-like"/>
    <property type="match status" value="1"/>
</dbReference>
<dbReference type="InterPro" id="IPR006818">
    <property type="entry name" value="ASF1-like"/>
</dbReference>
<dbReference type="InterPro" id="IPR036747">
    <property type="entry name" value="ASF1-like_sf"/>
</dbReference>
<dbReference type="InterPro" id="IPR017282">
    <property type="entry name" value="Hist_deposition_Asf1"/>
</dbReference>
<dbReference type="PANTHER" id="PTHR12040">
    <property type="entry name" value="ANTI-SILENCING PROTEIN 1"/>
    <property type="match status" value="1"/>
</dbReference>
<dbReference type="PANTHER" id="PTHR12040:SF0">
    <property type="entry name" value="HISTONE CHAPERONE ASF1"/>
    <property type="match status" value="1"/>
</dbReference>
<dbReference type="Pfam" id="PF04729">
    <property type="entry name" value="ASF1_hist_chap"/>
    <property type="match status" value="1"/>
</dbReference>
<dbReference type="PIRSF" id="PIRSF037759">
    <property type="entry name" value="Histone_Asf1"/>
    <property type="match status" value="1"/>
</dbReference>
<dbReference type="SUPFAM" id="SSF101546">
    <property type="entry name" value="ASF1-like"/>
    <property type="match status" value="1"/>
</dbReference>
<organism>
    <name type="scientific">Caenorhabditis elegans</name>
    <dbReference type="NCBI Taxonomy" id="6239"/>
    <lineage>
        <taxon>Eukaryota</taxon>
        <taxon>Metazoa</taxon>
        <taxon>Ecdysozoa</taxon>
        <taxon>Nematoda</taxon>
        <taxon>Chromadorea</taxon>
        <taxon>Rhabditida</taxon>
        <taxon>Rhabditina</taxon>
        <taxon>Rhabditomorpha</taxon>
        <taxon>Rhabditoidea</taxon>
        <taxon>Rhabditidae</taxon>
        <taxon>Peloderinae</taxon>
        <taxon>Caenorhabditis</taxon>
    </lineage>
</organism>
<evidence type="ECO:0000250" key="1"/>
<evidence type="ECO:0000256" key="2">
    <source>
        <dbReference type="SAM" id="MobiDB-lite"/>
    </source>
</evidence>
<evidence type="ECO:0000305" key="3"/>
<evidence type="ECO:0000312" key="4">
    <source>
        <dbReference type="WormBase" id="F10G7.3"/>
    </source>
</evidence>
<feature type="chain" id="PRO_0000284023" description="Probable histone chaperone asf-1">
    <location>
        <begin position="1"/>
        <end position="275"/>
    </location>
</feature>
<feature type="region of interest" description="Disordered" evidence="2">
    <location>
        <begin position="157"/>
        <end position="275"/>
    </location>
</feature>
<feature type="compositionally biased region" description="Acidic residues" evidence="2">
    <location>
        <begin position="157"/>
        <end position="166"/>
    </location>
</feature>
<feature type="compositionally biased region" description="Acidic residues" evidence="2">
    <location>
        <begin position="183"/>
        <end position="207"/>
    </location>
</feature>
<feature type="compositionally biased region" description="Acidic residues" evidence="2">
    <location>
        <begin position="230"/>
        <end position="247"/>
    </location>
</feature>
<feature type="compositionally biased region" description="Basic and acidic residues" evidence="2">
    <location>
        <begin position="265"/>
        <end position="275"/>
    </location>
</feature>
<accession>Q19326</accession>
<protein>
    <recommendedName>
        <fullName>Probable histone chaperone asf-1</fullName>
    </recommendedName>
    <alternativeName>
        <fullName>Anti-silencing function protein 1</fullName>
    </alternativeName>
</protein>
<name>ASF1_CAEEL</name>
<reference key="1">
    <citation type="journal article" date="1998" name="Science">
        <title>Genome sequence of the nematode C. elegans: a platform for investigating biology.</title>
        <authorList>
            <consortium name="The C. elegans sequencing consortium"/>
        </authorList>
    </citation>
    <scope>NUCLEOTIDE SEQUENCE [LARGE SCALE GENOMIC DNA]</scope>
    <source>
        <strain>Bristol N2</strain>
    </source>
</reference>
<gene>
    <name evidence="4" type="primary">unc-85</name>
    <name evidence="4" type="synonym">asf-1</name>
    <name evidence="4" type="ORF">F10G7.3</name>
</gene>
<comment type="function">
    <text evidence="1">Histone chaperone that facilitates histone deposition and histone exchange and removal during nucleosome assembly and disassembly.</text>
</comment>
<comment type="subunit">
    <text evidence="1">Interacts with histone H3 and histone H4.</text>
</comment>
<comment type="subcellular location">
    <subcellularLocation>
        <location evidence="1">Nucleus</location>
    </subcellularLocation>
</comment>
<comment type="similarity">
    <text evidence="3">Belongs to the ASF1 family.</text>
</comment>
<proteinExistence type="inferred from homology"/>
<keyword id="KW-0143">Chaperone</keyword>
<keyword id="KW-0156">Chromatin regulator</keyword>
<keyword id="KW-0539">Nucleus</keyword>
<keyword id="KW-1185">Reference proteome</keyword>
<keyword id="KW-0804">Transcription</keyword>
<keyword id="KW-0805">Transcription regulation</keyword>
<sequence length="275" mass="31240">MASRVNIVQVQILDNPAMFVDKFKLEITFEVFEHLPHDLEWELVYVGSGTSRDFDQVLDSALVGPIPEGRHKFVFDADHPDISKIPVDDIVGVSVLLLRCKYNDQEFINMGWFVANEYTEEELKENPPSQPLIEKLSRKVETEDLRITTFPIRWTDEDPVAEPVEDEANRVFAEDDLMPLNDDGQEDDDEEEEDDDEMEANAEEVDLNESFNERLANALDGAEQKGADEKMEDDGANEDVDMADDEPGVQINTDTKVPESMAEPLSDKTNNEMVQ</sequence>